<organism>
    <name type="scientific">Campylobacter jejuni subsp. doylei (strain ATCC BAA-1458 / RM4099 / 269.97)</name>
    <dbReference type="NCBI Taxonomy" id="360109"/>
    <lineage>
        <taxon>Bacteria</taxon>
        <taxon>Pseudomonadati</taxon>
        <taxon>Campylobacterota</taxon>
        <taxon>Epsilonproteobacteria</taxon>
        <taxon>Campylobacterales</taxon>
        <taxon>Campylobacteraceae</taxon>
        <taxon>Campylobacter</taxon>
    </lineage>
</organism>
<comment type="function">
    <text evidence="1">Together with the chaperonin GroEL, plays an essential role in assisting protein folding. The GroEL-GroES system forms a nano-cage that allows encapsulation of the non-native substrate proteins and provides a physical environment optimized to promote and accelerate protein folding. GroES binds to the apical surface of the GroEL ring, thereby capping the opening of the GroEL channel.</text>
</comment>
<comment type="subunit">
    <text evidence="1">Heptamer of 7 subunits arranged in a ring. Interacts with the chaperonin GroEL.</text>
</comment>
<comment type="subcellular location">
    <subcellularLocation>
        <location evidence="1">Cytoplasm</location>
    </subcellularLocation>
</comment>
<comment type="similarity">
    <text evidence="1">Belongs to the GroES chaperonin family.</text>
</comment>
<keyword id="KW-0143">Chaperone</keyword>
<keyword id="KW-0963">Cytoplasm</keyword>
<evidence type="ECO:0000255" key="1">
    <source>
        <dbReference type="HAMAP-Rule" id="MF_00580"/>
    </source>
</evidence>
<proteinExistence type="inferred from homology"/>
<accession>A7H2F9</accession>
<name>CH10_CAMJD</name>
<feature type="chain" id="PRO_1000025230" description="Co-chaperonin GroES">
    <location>
        <begin position="1"/>
        <end position="86"/>
    </location>
</feature>
<reference key="1">
    <citation type="submission" date="2007-07" db="EMBL/GenBank/DDBJ databases">
        <title>Complete genome sequence of Campylobacter jejuni subsp doylei 269.97 isolated from human blood.</title>
        <authorList>
            <person name="Fouts D.E."/>
            <person name="Mongodin E.F."/>
            <person name="Puiu D."/>
            <person name="Sebastian Y."/>
            <person name="Miller W.G."/>
            <person name="Mandrell R.E."/>
            <person name="Lastovica A.J."/>
            <person name="Nelson K.E."/>
        </authorList>
    </citation>
    <scope>NUCLEOTIDE SEQUENCE [LARGE SCALE GENOMIC DNA]</scope>
    <source>
        <strain>ATCC BAA-1458 / RM4099 / 269.97</strain>
    </source>
</reference>
<gene>
    <name evidence="1" type="primary">groES</name>
    <name evidence="1" type="synonym">groS</name>
    <name type="ordered locus">JJD26997_0510</name>
</gene>
<dbReference type="EMBL" id="CP000768">
    <property type="protein sequence ID" value="ABS44320.1"/>
    <property type="molecule type" value="Genomic_DNA"/>
</dbReference>
<dbReference type="SMR" id="A7H2F9"/>
<dbReference type="KEGG" id="cjd:JJD26997_0510"/>
<dbReference type="HOGENOM" id="CLU_132825_2_0_7"/>
<dbReference type="Proteomes" id="UP000002302">
    <property type="component" value="Chromosome"/>
</dbReference>
<dbReference type="GO" id="GO:0005737">
    <property type="term" value="C:cytoplasm"/>
    <property type="evidence" value="ECO:0007669"/>
    <property type="project" value="UniProtKB-SubCell"/>
</dbReference>
<dbReference type="GO" id="GO:0005524">
    <property type="term" value="F:ATP binding"/>
    <property type="evidence" value="ECO:0007669"/>
    <property type="project" value="InterPro"/>
</dbReference>
<dbReference type="GO" id="GO:0046872">
    <property type="term" value="F:metal ion binding"/>
    <property type="evidence" value="ECO:0007669"/>
    <property type="project" value="TreeGrafter"/>
</dbReference>
<dbReference type="GO" id="GO:0044183">
    <property type="term" value="F:protein folding chaperone"/>
    <property type="evidence" value="ECO:0007669"/>
    <property type="project" value="InterPro"/>
</dbReference>
<dbReference type="GO" id="GO:0051087">
    <property type="term" value="F:protein-folding chaperone binding"/>
    <property type="evidence" value="ECO:0007669"/>
    <property type="project" value="TreeGrafter"/>
</dbReference>
<dbReference type="GO" id="GO:0051082">
    <property type="term" value="F:unfolded protein binding"/>
    <property type="evidence" value="ECO:0007669"/>
    <property type="project" value="TreeGrafter"/>
</dbReference>
<dbReference type="GO" id="GO:0051085">
    <property type="term" value="P:chaperone cofactor-dependent protein refolding"/>
    <property type="evidence" value="ECO:0007669"/>
    <property type="project" value="TreeGrafter"/>
</dbReference>
<dbReference type="CDD" id="cd00320">
    <property type="entry name" value="cpn10"/>
    <property type="match status" value="1"/>
</dbReference>
<dbReference type="FunFam" id="2.30.33.40:FF:000001">
    <property type="entry name" value="10 kDa chaperonin"/>
    <property type="match status" value="1"/>
</dbReference>
<dbReference type="Gene3D" id="2.30.33.40">
    <property type="entry name" value="GroES chaperonin"/>
    <property type="match status" value="1"/>
</dbReference>
<dbReference type="HAMAP" id="MF_00580">
    <property type="entry name" value="CH10"/>
    <property type="match status" value="1"/>
</dbReference>
<dbReference type="InterPro" id="IPR020818">
    <property type="entry name" value="Chaperonin_GroES"/>
</dbReference>
<dbReference type="InterPro" id="IPR037124">
    <property type="entry name" value="Chaperonin_GroES_sf"/>
</dbReference>
<dbReference type="InterPro" id="IPR011032">
    <property type="entry name" value="GroES-like_sf"/>
</dbReference>
<dbReference type="NCBIfam" id="NF001537">
    <property type="entry name" value="PRK00364.3-3"/>
    <property type="match status" value="1"/>
</dbReference>
<dbReference type="PANTHER" id="PTHR10772">
    <property type="entry name" value="10 KDA HEAT SHOCK PROTEIN"/>
    <property type="match status" value="1"/>
</dbReference>
<dbReference type="PANTHER" id="PTHR10772:SF58">
    <property type="entry name" value="CO-CHAPERONIN GROES"/>
    <property type="match status" value="1"/>
</dbReference>
<dbReference type="Pfam" id="PF00166">
    <property type="entry name" value="Cpn10"/>
    <property type="match status" value="1"/>
</dbReference>
<dbReference type="PRINTS" id="PR00297">
    <property type="entry name" value="CHAPERONIN10"/>
</dbReference>
<dbReference type="SMART" id="SM00883">
    <property type="entry name" value="Cpn10"/>
    <property type="match status" value="1"/>
</dbReference>
<dbReference type="SUPFAM" id="SSF50129">
    <property type="entry name" value="GroES-like"/>
    <property type="match status" value="1"/>
</dbReference>
<sequence>MNFQPLGKRVLVKRVEETKTTASGIIIPDNAKEKPLMGEVVAVSKEITDIANGDKIMFAKYGGTEIKLDNNEYLVLNLDDILGILK</sequence>
<protein>
    <recommendedName>
        <fullName evidence="1">Co-chaperonin GroES</fullName>
    </recommendedName>
    <alternativeName>
        <fullName evidence="1">10 kDa chaperonin</fullName>
    </alternativeName>
    <alternativeName>
        <fullName evidence="1">Chaperonin-10</fullName>
        <shortName evidence="1">Cpn10</shortName>
    </alternativeName>
</protein>